<sequence length="201" mass="23299">MPGIFFSHPNALKEVTNKPDEVMAQKKKNFAVPWKNYLKSMLPHLETIKSSSSSSSSDTEKNKLTPNEIIQWTMSLEKLLVSEEGQAVFRAFLKSEFSEENIEFWLACEDYKATNDSEELRCKANVIYQEFIQPNANKQINIDFSTRNSVTKDLLEPTKATFNGAQKMIFILMERDSYPRFLKSEIFFRLAERHHGNNMRG</sequence>
<accession>A1A643</accession>
<keyword id="KW-1003">Cell membrane</keyword>
<keyword id="KW-0963">Cytoplasm</keyword>
<keyword id="KW-0343">GTPase activation</keyword>
<keyword id="KW-0472">Membrane</keyword>
<keyword id="KW-1185">Reference proteome</keyword>
<keyword id="KW-0734">Signal transduction inhibitor</keyword>
<organism>
    <name type="scientific">Xenopus laevis</name>
    <name type="common">African clawed frog</name>
    <dbReference type="NCBI Taxonomy" id="8355"/>
    <lineage>
        <taxon>Eukaryota</taxon>
        <taxon>Metazoa</taxon>
        <taxon>Chordata</taxon>
        <taxon>Craniata</taxon>
        <taxon>Vertebrata</taxon>
        <taxon>Euteleostomi</taxon>
        <taxon>Amphibia</taxon>
        <taxon>Batrachia</taxon>
        <taxon>Anura</taxon>
        <taxon>Pipoidea</taxon>
        <taxon>Pipidae</taxon>
        <taxon>Xenopodinae</taxon>
        <taxon>Xenopus</taxon>
        <taxon>Xenopus</taxon>
    </lineage>
</organism>
<feature type="chain" id="PRO_0000364205" description="Regulator of G-protein signaling 1">
    <location>
        <begin position="1"/>
        <end position="201"/>
    </location>
</feature>
<feature type="domain" description="RGS" evidence="3">
    <location>
        <begin position="75"/>
        <end position="191"/>
    </location>
</feature>
<name>RGS1_XENLA</name>
<evidence type="ECO:0000250" key="1">
    <source>
        <dbReference type="UniProtKB" id="Q08116"/>
    </source>
</evidence>
<evidence type="ECO:0000250" key="2">
    <source>
        <dbReference type="UniProtKB" id="Q9JL25"/>
    </source>
</evidence>
<evidence type="ECO:0000255" key="3">
    <source>
        <dbReference type="PROSITE-ProRule" id="PRU00171"/>
    </source>
</evidence>
<evidence type="ECO:0000305" key="4"/>
<comment type="function">
    <text evidence="1 2">Regulates G protein-coupled receptor signaling cascades, including signaling downstream of the N-formylpeptide chemoattractant receptors and leukotriene receptors. Inhibits B cell chemotaxis (By similarity). Inhibits signal transduction by increasing the GTPase activity of G protein alpha subunits, thereby driving them into their inactive GDP-bound form (By similarity).</text>
</comment>
<comment type="subcellular location">
    <subcellularLocation>
        <location evidence="1">Cell membrane</location>
        <topology evidence="1">Peripheral membrane protein</topology>
        <orientation evidence="1">Cytoplasmic side</orientation>
    </subcellularLocation>
    <subcellularLocation>
        <location evidence="1">Cytoplasm</location>
        <location evidence="1">Cytosol</location>
    </subcellularLocation>
</comment>
<comment type="sequence caution" evidence="4">
    <conflict type="erroneous initiation">
        <sequence resource="EMBL-CDS" id="AAI28960"/>
    </conflict>
</comment>
<reference key="1">
    <citation type="submission" date="2006-12" db="EMBL/GenBank/DDBJ databases">
        <authorList>
            <consortium name="NIH - Xenopus Gene Collection (XGC) project"/>
        </authorList>
    </citation>
    <scope>NUCLEOTIDE SEQUENCE [LARGE SCALE MRNA]</scope>
    <source>
        <tissue>Skin</tissue>
    </source>
</reference>
<protein>
    <recommendedName>
        <fullName>Regulator of G-protein signaling 1</fullName>
        <shortName>RGS1</shortName>
    </recommendedName>
</protein>
<gene>
    <name type="primary">rgs1</name>
</gene>
<dbReference type="EMBL" id="BC128959">
    <property type="protein sequence ID" value="AAI28960.1"/>
    <property type="status" value="ALT_INIT"/>
    <property type="molecule type" value="mRNA"/>
</dbReference>
<dbReference type="SMR" id="A1A643"/>
<dbReference type="AGR" id="Xenbase:XB-GENE-17339795"/>
<dbReference type="Xenbase" id="XB-GENE-17339795">
    <property type="gene designation" value="rgs1.L"/>
</dbReference>
<dbReference type="OMA" id="IFILMER"/>
<dbReference type="Proteomes" id="UP000186698">
    <property type="component" value="Unplaced"/>
</dbReference>
<dbReference type="GO" id="GO:0009898">
    <property type="term" value="C:cytoplasmic side of plasma membrane"/>
    <property type="evidence" value="ECO:0000250"/>
    <property type="project" value="UniProtKB"/>
</dbReference>
<dbReference type="GO" id="GO:0005829">
    <property type="term" value="C:cytosol"/>
    <property type="evidence" value="ECO:0000250"/>
    <property type="project" value="UniProtKB"/>
</dbReference>
<dbReference type="GO" id="GO:0005096">
    <property type="term" value="F:GTPase activator activity"/>
    <property type="evidence" value="ECO:0000250"/>
    <property type="project" value="UniProtKB"/>
</dbReference>
<dbReference type="GO" id="GO:0007186">
    <property type="term" value="P:G protein-coupled receptor signaling pathway"/>
    <property type="evidence" value="ECO:0000250"/>
    <property type="project" value="UniProtKB"/>
</dbReference>
<dbReference type="GO" id="GO:0061737">
    <property type="term" value="P:leukotriene signaling pathway"/>
    <property type="evidence" value="ECO:0000250"/>
    <property type="project" value="UniProtKB"/>
</dbReference>
<dbReference type="GO" id="GO:0009968">
    <property type="term" value="P:negative regulation of signal transduction"/>
    <property type="evidence" value="ECO:0007669"/>
    <property type="project" value="UniProtKB-KW"/>
</dbReference>
<dbReference type="GO" id="GO:0043547">
    <property type="term" value="P:positive regulation of GTPase activity"/>
    <property type="evidence" value="ECO:0000250"/>
    <property type="project" value="UniProtKB"/>
</dbReference>
<dbReference type="GO" id="GO:0007165">
    <property type="term" value="P:signal transduction"/>
    <property type="evidence" value="ECO:0000250"/>
    <property type="project" value="UniProtKB"/>
</dbReference>
<dbReference type="FunFam" id="1.10.167.10:FF:000001">
    <property type="entry name" value="Putative regulator of g-protein signaling 12"/>
    <property type="match status" value="1"/>
</dbReference>
<dbReference type="FunFam" id="1.10.196.10:FF:000009">
    <property type="entry name" value="Regulator of G-protein signaling 1"/>
    <property type="match status" value="1"/>
</dbReference>
<dbReference type="Gene3D" id="1.10.196.10">
    <property type="match status" value="2"/>
</dbReference>
<dbReference type="Gene3D" id="1.10.167.10">
    <property type="entry name" value="Regulator of G-protein Signalling 4, domain 2"/>
    <property type="match status" value="1"/>
</dbReference>
<dbReference type="InterPro" id="IPR016137">
    <property type="entry name" value="RGS"/>
</dbReference>
<dbReference type="InterPro" id="IPR036305">
    <property type="entry name" value="RGS_sf"/>
</dbReference>
<dbReference type="InterPro" id="IPR024066">
    <property type="entry name" value="RGS_subdom1/3"/>
</dbReference>
<dbReference type="InterPro" id="IPR044926">
    <property type="entry name" value="RGS_subdomain_2"/>
</dbReference>
<dbReference type="PANTHER" id="PTHR10845">
    <property type="entry name" value="REGULATOR OF G PROTEIN SIGNALING"/>
    <property type="match status" value="1"/>
</dbReference>
<dbReference type="PANTHER" id="PTHR10845:SF34">
    <property type="entry name" value="REGULATOR OF G-PROTEIN SIGNALING 1"/>
    <property type="match status" value="1"/>
</dbReference>
<dbReference type="Pfam" id="PF00615">
    <property type="entry name" value="RGS"/>
    <property type="match status" value="1"/>
</dbReference>
<dbReference type="PRINTS" id="PR01301">
    <property type="entry name" value="RGSPROTEIN"/>
</dbReference>
<dbReference type="SMART" id="SM00315">
    <property type="entry name" value="RGS"/>
    <property type="match status" value="1"/>
</dbReference>
<dbReference type="SUPFAM" id="SSF48097">
    <property type="entry name" value="Regulator of G-protein signaling, RGS"/>
    <property type="match status" value="1"/>
</dbReference>
<dbReference type="PROSITE" id="PS50132">
    <property type="entry name" value="RGS"/>
    <property type="match status" value="1"/>
</dbReference>
<proteinExistence type="evidence at transcript level"/>